<accession>P9WHD7</accession>
<accession>L0T7I9</accession>
<accession>P95071</accession>
<sequence length="146" mass="15533">MTLKLHDLRPARGSKIARTRVGRGDGSKGKTAGRGTKGTRARKQVPVTFEGGQMPIHMRLPKLKGFRNRFRTEYEIVNVGDINRLFPQGGAVGVDDLVAKGAVRKNALVKVLGDGKLTAKVDVSAHKFSGSARAKITAAGGSATEL</sequence>
<organism>
    <name type="scientific">Mycobacterium tuberculosis (strain ATCC 25618 / H37Rv)</name>
    <dbReference type="NCBI Taxonomy" id="83332"/>
    <lineage>
        <taxon>Bacteria</taxon>
        <taxon>Bacillati</taxon>
        <taxon>Actinomycetota</taxon>
        <taxon>Actinomycetes</taxon>
        <taxon>Mycobacteriales</taxon>
        <taxon>Mycobacteriaceae</taxon>
        <taxon>Mycobacterium</taxon>
        <taxon>Mycobacterium tuberculosis complex</taxon>
    </lineage>
</organism>
<comment type="function">
    <text evidence="1">Binds to the 23S rRNA.</text>
</comment>
<comment type="subunit">
    <text evidence="1">Part of the 50S ribosomal subunit.</text>
</comment>
<comment type="similarity">
    <text evidence="1">Belongs to the universal ribosomal protein uL15 family.</text>
</comment>
<proteinExistence type="evidence at protein level"/>
<feature type="chain" id="PRO_0000104755" description="Large ribosomal subunit protein uL15">
    <location>
        <begin position="1"/>
        <end position="146"/>
    </location>
</feature>
<feature type="region of interest" description="Disordered" evidence="2">
    <location>
        <begin position="1"/>
        <end position="41"/>
    </location>
</feature>
<feature type="compositionally biased region" description="Basic and acidic residues" evidence="2">
    <location>
        <begin position="1"/>
        <end position="10"/>
    </location>
</feature>
<protein>
    <recommendedName>
        <fullName evidence="1">Large ribosomal subunit protein uL15</fullName>
    </recommendedName>
    <alternativeName>
        <fullName evidence="3">50S ribosomal protein L15</fullName>
    </alternativeName>
</protein>
<dbReference type="EMBL" id="AL123456">
    <property type="protein sequence ID" value="CCP43467.1"/>
    <property type="molecule type" value="Genomic_DNA"/>
</dbReference>
<dbReference type="PIR" id="F70644">
    <property type="entry name" value="F70644"/>
</dbReference>
<dbReference type="RefSeq" id="NP_215237.1">
    <property type="nucleotide sequence ID" value="NC_000962.3"/>
</dbReference>
<dbReference type="RefSeq" id="WP_003898563.1">
    <property type="nucleotide sequence ID" value="NZ_NVQJ01000007.1"/>
</dbReference>
<dbReference type="PDB" id="5V7Q">
    <property type="method" value="EM"/>
    <property type="resolution" value="3.70 A"/>
    <property type="chains" value="L=1-146"/>
</dbReference>
<dbReference type="PDB" id="5V93">
    <property type="method" value="EM"/>
    <property type="resolution" value="4.00 A"/>
    <property type="chains" value="L=1-146"/>
</dbReference>
<dbReference type="PDB" id="7KGB">
    <property type="method" value="EM"/>
    <property type="resolution" value="2.70 A"/>
    <property type="chains" value="L=1-146"/>
</dbReference>
<dbReference type="PDB" id="7MSC">
    <property type="method" value="EM"/>
    <property type="resolution" value="2.97 A"/>
    <property type="chains" value="L=1-146"/>
</dbReference>
<dbReference type="PDB" id="7MSH">
    <property type="method" value="EM"/>
    <property type="resolution" value="3.23 A"/>
    <property type="chains" value="L=1-146"/>
</dbReference>
<dbReference type="PDB" id="7MSM">
    <property type="method" value="EM"/>
    <property type="resolution" value="2.79 A"/>
    <property type="chains" value="L=1-146"/>
</dbReference>
<dbReference type="PDB" id="7MSZ">
    <property type="method" value="EM"/>
    <property type="resolution" value="3.10 A"/>
    <property type="chains" value="L=1-146"/>
</dbReference>
<dbReference type="PDB" id="7MT2">
    <property type="method" value="EM"/>
    <property type="resolution" value="2.76 A"/>
    <property type="chains" value="L=1-146"/>
</dbReference>
<dbReference type="PDB" id="7MT3">
    <property type="method" value="EM"/>
    <property type="resolution" value="2.80 A"/>
    <property type="chains" value="L=1-146"/>
</dbReference>
<dbReference type="PDB" id="7MT7">
    <property type="method" value="EM"/>
    <property type="resolution" value="2.71 A"/>
    <property type="chains" value="L=1-146"/>
</dbReference>
<dbReference type="PDB" id="7SFR">
    <property type="method" value="EM"/>
    <property type="resolution" value="2.60 A"/>
    <property type="chains" value="L=1-146"/>
</dbReference>
<dbReference type="PDBsum" id="5V7Q"/>
<dbReference type="PDBsum" id="5V93"/>
<dbReference type="PDBsum" id="7KGB"/>
<dbReference type="PDBsum" id="7MSC"/>
<dbReference type="PDBsum" id="7MSH"/>
<dbReference type="PDBsum" id="7MSM"/>
<dbReference type="PDBsum" id="7MSZ"/>
<dbReference type="PDBsum" id="7MT2"/>
<dbReference type="PDBsum" id="7MT3"/>
<dbReference type="PDBsum" id="7MT7"/>
<dbReference type="PDBsum" id="7SFR"/>
<dbReference type="EMDB" id="EMD-22865"/>
<dbReference type="EMDB" id="EMD-23961"/>
<dbReference type="EMDB" id="EMD-23962"/>
<dbReference type="EMDB" id="EMD-23969"/>
<dbReference type="EMDB" id="EMD-23972"/>
<dbReference type="EMDB" id="EMD-23974"/>
<dbReference type="EMDB" id="EMD-23975"/>
<dbReference type="EMDB" id="EMD-23976"/>
<dbReference type="EMDB" id="EMD-8645"/>
<dbReference type="SMR" id="P9WHD7"/>
<dbReference type="FunCoup" id="P9WHD7">
    <property type="interactions" value="332"/>
</dbReference>
<dbReference type="STRING" id="83332.Rv0723"/>
<dbReference type="PaxDb" id="83332-Rv0723"/>
<dbReference type="DNASU" id="888531"/>
<dbReference type="GeneID" id="888531"/>
<dbReference type="KEGG" id="mtu:Rv0723"/>
<dbReference type="KEGG" id="mtv:RVBD_0723"/>
<dbReference type="TubercuList" id="Rv0723"/>
<dbReference type="eggNOG" id="COG0200">
    <property type="taxonomic scope" value="Bacteria"/>
</dbReference>
<dbReference type="InParanoid" id="P9WHD7"/>
<dbReference type="OrthoDB" id="9810293at2"/>
<dbReference type="PhylomeDB" id="P9WHD7"/>
<dbReference type="PRO" id="PR:P9WHD7"/>
<dbReference type="Proteomes" id="UP000001584">
    <property type="component" value="Chromosome"/>
</dbReference>
<dbReference type="GO" id="GO:0022625">
    <property type="term" value="C:cytosolic large ribosomal subunit"/>
    <property type="evidence" value="ECO:0000318"/>
    <property type="project" value="GO_Central"/>
</dbReference>
<dbReference type="GO" id="GO:0005886">
    <property type="term" value="C:plasma membrane"/>
    <property type="evidence" value="ECO:0007005"/>
    <property type="project" value="MTBBASE"/>
</dbReference>
<dbReference type="GO" id="GO:0019843">
    <property type="term" value="F:rRNA binding"/>
    <property type="evidence" value="ECO:0007669"/>
    <property type="project" value="UniProtKB-UniRule"/>
</dbReference>
<dbReference type="GO" id="GO:0003735">
    <property type="term" value="F:structural constituent of ribosome"/>
    <property type="evidence" value="ECO:0000318"/>
    <property type="project" value="GO_Central"/>
</dbReference>
<dbReference type="GO" id="GO:0006412">
    <property type="term" value="P:translation"/>
    <property type="evidence" value="ECO:0007669"/>
    <property type="project" value="UniProtKB-UniRule"/>
</dbReference>
<dbReference type="FunFam" id="3.100.10.10:FF:000005">
    <property type="entry name" value="50S ribosomal protein L15"/>
    <property type="match status" value="1"/>
</dbReference>
<dbReference type="Gene3D" id="3.100.10.10">
    <property type="match status" value="1"/>
</dbReference>
<dbReference type="HAMAP" id="MF_01341">
    <property type="entry name" value="Ribosomal_uL15"/>
    <property type="match status" value="1"/>
</dbReference>
<dbReference type="InterPro" id="IPR030878">
    <property type="entry name" value="Ribosomal_uL15"/>
</dbReference>
<dbReference type="InterPro" id="IPR021131">
    <property type="entry name" value="Ribosomal_uL15/eL18"/>
</dbReference>
<dbReference type="InterPro" id="IPR036227">
    <property type="entry name" value="Ribosomal_uL15/eL18_sf"/>
</dbReference>
<dbReference type="InterPro" id="IPR005749">
    <property type="entry name" value="Ribosomal_uL15_bac-type"/>
</dbReference>
<dbReference type="InterPro" id="IPR001196">
    <property type="entry name" value="Ribosomal_uL15_CS"/>
</dbReference>
<dbReference type="NCBIfam" id="TIGR01071">
    <property type="entry name" value="rplO_bact"/>
    <property type="match status" value="1"/>
</dbReference>
<dbReference type="PANTHER" id="PTHR12934">
    <property type="entry name" value="50S RIBOSOMAL PROTEIN L15"/>
    <property type="match status" value="1"/>
</dbReference>
<dbReference type="PANTHER" id="PTHR12934:SF11">
    <property type="entry name" value="LARGE RIBOSOMAL SUBUNIT PROTEIN UL15M"/>
    <property type="match status" value="1"/>
</dbReference>
<dbReference type="Pfam" id="PF00828">
    <property type="entry name" value="Ribosomal_L27A"/>
    <property type="match status" value="1"/>
</dbReference>
<dbReference type="SUPFAM" id="SSF52080">
    <property type="entry name" value="Ribosomal proteins L15p and L18e"/>
    <property type="match status" value="1"/>
</dbReference>
<dbReference type="PROSITE" id="PS00475">
    <property type="entry name" value="RIBOSOMAL_L15"/>
    <property type="match status" value="1"/>
</dbReference>
<evidence type="ECO:0000255" key="1">
    <source>
        <dbReference type="HAMAP-Rule" id="MF_01341"/>
    </source>
</evidence>
<evidence type="ECO:0000256" key="2">
    <source>
        <dbReference type="SAM" id="MobiDB-lite"/>
    </source>
</evidence>
<evidence type="ECO:0000305" key="3"/>
<reference key="1">
    <citation type="journal article" date="1998" name="Nature">
        <title>Deciphering the biology of Mycobacterium tuberculosis from the complete genome sequence.</title>
        <authorList>
            <person name="Cole S.T."/>
            <person name="Brosch R."/>
            <person name="Parkhill J."/>
            <person name="Garnier T."/>
            <person name="Churcher C.M."/>
            <person name="Harris D.E."/>
            <person name="Gordon S.V."/>
            <person name="Eiglmeier K."/>
            <person name="Gas S."/>
            <person name="Barry C.E. III"/>
            <person name="Tekaia F."/>
            <person name="Badcock K."/>
            <person name="Basham D."/>
            <person name="Brown D."/>
            <person name="Chillingworth T."/>
            <person name="Connor R."/>
            <person name="Davies R.M."/>
            <person name="Devlin K."/>
            <person name="Feltwell T."/>
            <person name="Gentles S."/>
            <person name="Hamlin N."/>
            <person name="Holroyd S."/>
            <person name="Hornsby T."/>
            <person name="Jagels K."/>
            <person name="Krogh A."/>
            <person name="McLean J."/>
            <person name="Moule S."/>
            <person name="Murphy L.D."/>
            <person name="Oliver S."/>
            <person name="Osborne J."/>
            <person name="Quail M.A."/>
            <person name="Rajandream M.A."/>
            <person name="Rogers J."/>
            <person name="Rutter S."/>
            <person name="Seeger K."/>
            <person name="Skelton S."/>
            <person name="Squares S."/>
            <person name="Squares R."/>
            <person name="Sulston J.E."/>
            <person name="Taylor K."/>
            <person name="Whitehead S."/>
            <person name="Barrell B.G."/>
        </authorList>
    </citation>
    <scope>NUCLEOTIDE SEQUENCE [LARGE SCALE GENOMIC DNA]</scope>
    <source>
        <strain>ATCC 25618 / H37Rv</strain>
    </source>
</reference>
<reference key="2">
    <citation type="journal article" date="2011" name="Mol. Cell. Proteomics">
        <title>Proteogenomic analysis of Mycobacterium tuberculosis by high resolution mass spectrometry.</title>
        <authorList>
            <person name="Kelkar D.S."/>
            <person name="Kumar D."/>
            <person name="Kumar P."/>
            <person name="Balakrishnan L."/>
            <person name="Muthusamy B."/>
            <person name="Yadav A.K."/>
            <person name="Shrivastava P."/>
            <person name="Marimuthu A."/>
            <person name="Anand S."/>
            <person name="Sundaram H."/>
            <person name="Kingsbury R."/>
            <person name="Harsha H.C."/>
            <person name="Nair B."/>
            <person name="Prasad T.S."/>
            <person name="Chauhan D.S."/>
            <person name="Katoch K."/>
            <person name="Katoch V.M."/>
            <person name="Kumar P."/>
            <person name="Chaerkady R."/>
            <person name="Ramachandran S."/>
            <person name="Dash D."/>
            <person name="Pandey A."/>
        </authorList>
    </citation>
    <scope>IDENTIFICATION BY MASS SPECTROMETRY [LARGE SCALE ANALYSIS]</scope>
    <source>
        <strain>ATCC 25618 / H37Rv</strain>
    </source>
</reference>
<keyword id="KW-0002">3D-structure</keyword>
<keyword id="KW-1185">Reference proteome</keyword>
<keyword id="KW-0687">Ribonucleoprotein</keyword>
<keyword id="KW-0689">Ribosomal protein</keyword>
<keyword id="KW-0694">RNA-binding</keyword>
<keyword id="KW-0699">rRNA-binding</keyword>
<gene>
    <name evidence="1" type="primary">rplO</name>
    <name type="ordered locus">Rv0723</name>
    <name type="ORF">MTCY210.42</name>
</gene>
<name>RL15_MYCTU</name>